<evidence type="ECO:0000255" key="1"/>
<evidence type="ECO:0000255" key="2">
    <source>
        <dbReference type="PROSITE-ProRule" id="PRU00498"/>
    </source>
</evidence>
<evidence type="ECO:0000256" key="3">
    <source>
        <dbReference type="SAM" id="MobiDB-lite"/>
    </source>
</evidence>
<evidence type="ECO:0000269" key="4">
    <source>
    </source>
</evidence>
<gene>
    <name type="ORF">ARB_08043</name>
</gene>
<proteinExistence type="evidence at protein level"/>
<accession>D4AUX6</accession>
<organism>
    <name type="scientific">Arthroderma benhamiae (strain ATCC MYA-4681 / CBS 112371)</name>
    <name type="common">Trichophyton mentagrophytes</name>
    <dbReference type="NCBI Taxonomy" id="663331"/>
    <lineage>
        <taxon>Eukaryota</taxon>
        <taxon>Fungi</taxon>
        <taxon>Dikarya</taxon>
        <taxon>Ascomycota</taxon>
        <taxon>Pezizomycotina</taxon>
        <taxon>Eurotiomycetes</taxon>
        <taxon>Eurotiomycetidae</taxon>
        <taxon>Onygenales</taxon>
        <taxon>Arthrodermataceae</taxon>
        <taxon>Trichophyton</taxon>
    </lineage>
</organism>
<feature type="signal peptide" evidence="1">
    <location>
        <begin position="1"/>
        <end position="23"/>
    </location>
</feature>
<feature type="chain" id="PRO_0000434669" description="Uncharacterized secreted protein ARB_08043" evidence="1">
    <location>
        <begin position="24"/>
        <end position="442"/>
    </location>
</feature>
<feature type="region of interest" description="Disordered" evidence="3">
    <location>
        <begin position="36"/>
        <end position="67"/>
    </location>
</feature>
<feature type="region of interest" description="Disordered" evidence="3">
    <location>
        <begin position="91"/>
        <end position="115"/>
    </location>
</feature>
<feature type="compositionally biased region" description="Low complexity" evidence="3">
    <location>
        <begin position="48"/>
        <end position="67"/>
    </location>
</feature>
<feature type="glycosylation site" description="N-linked (GlcNAc...) asparagine" evidence="2">
    <location>
        <position position="64"/>
    </location>
</feature>
<feature type="glycosylation site" description="N-linked (GlcNAc...) asparagine" evidence="2">
    <location>
        <position position="92"/>
    </location>
</feature>
<feature type="glycosylation site" description="N-linked (GlcNAc...) asparagine" evidence="2">
    <location>
        <position position="99"/>
    </location>
</feature>
<feature type="glycosylation site" description="N-linked (GlcNAc...) asparagine" evidence="2">
    <location>
        <position position="130"/>
    </location>
</feature>
<feature type="glycosylation site" description="N-linked (GlcNAc...) asparagine" evidence="2">
    <location>
        <position position="174"/>
    </location>
</feature>
<feature type="glycosylation site" description="N-linked (GlcNAc...) asparagine" evidence="2">
    <location>
        <position position="225"/>
    </location>
</feature>
<feature type="glycosylation site" description="N-linked (GlcNAc...) asparagine" evidence="2">
    <location>
        <position position="244"/>
    </location>
</feature>
<feature type="glycosylation site" description="N-linked (GlcNAc...) asparagine" evidence="2">
    <location>
        <position position="346"/>
    </location>
</feature>
<feature type="glycosylation site" description="N-linked (GlcNAc...) asparagine" evidence="2">
    <location>
        <position position="363"/>
    </location>
</feature>
<feature type="glycosylation site" description="N-linked (GlcNAc...) asparagine" evidence="2">
    <location>
        <position position="386"/>
    </location>
</feature>
<feature type="glycosylation site" description="N-linked (GlcNAc...) asparagine" evidence="2">
    <location>
        <position position="398"/>
    </location>
</feature>
<reference key="1">
    <citation type="journal article" date="2011" name="Genome Biol.">
        <title>Comparative and functional genomics provide insights into the pathogenicity of dermatophytic fungi.</title>
        <authorList>
            <person name="Burmester A."/>
            <person name="Shelest E."/>
            <person name="Gloeckner G."/>
            <person name="Heddergott C."/>
            <person name="Schindler S."/>
            <person name="Staib P."/>
            <person name="Heidel A."/>
            <person name="Felder M."/>
            <person name="Petzold A."/>
            <person name="Szafranski K."/>
            <person name="Feuermann M."/>
            <person name="Pedruzzi I."/>
            <person name="Priebe S."/>
            <person name="Groth M."/>
            <person name="Winkler R."/>
            <person name="Li W."/>
            <person name="Kniemeyer O."/>
            <person name="Schroeckh V."/>
            <person name="Hertweck C."/>
            <person name="Hube B."/>
            <person name="White T.C."/>
            <person name="Platzer M."/>
            <person name="Guthke R."/>
            <person name="Heitman J."/>
            <person name="Woestemeyer J."/>
            <person name="Zipfel P.F."/>
            <person name="Monod M."/>
            <person name="Brakhage A.A."/>
        </authorList>
    </citation>
    <scope>NUCLEOTIDE SEQUENCE [LARGE SCALE GENOMIC DNA]</scope>
    <source>
        <strain>ATCC MYA-4681 / CBS 112371</strain>
    </source>
</reference>
<reference key="2">
    <citation type="journal article" date="2011" name="Proteomics">
        <title>Identification of novel secreted proteases during extracellular proteolysis by dermatophytes at acidic pH.</title>
        <authorList>
            <person name="Sriranganadane D."/>
            <person name="Waridel P."/>
            <person name="Salamin K."/>
            <person name="Feuermann M."/>
            <person name="Mignon B."/>
            <person name="Staib P."/>
            <person name="Neuhaus J.M."/>
            <person name="Quadroni M."/>
            <person name="Monod M."/>
        </authorList>
    </citation>
    <scope>IDENTIFICATION BY MASS SPECTROMETRY</scope>
    <scope>SUBCELLULAR LOCATION</scope>
</reference>
<name>A8043_ARTBC</name>
<keyword id="KW-0325">Glycoprotein</keyword>
<keyword id="KW-1185">Reference proteome</keyword>
<keyword id="KW-0964">Secreted</keyword>
<keyword id="KW-0732">Signal</keyword>
<comment type="subcellular location">
    <subcellularLocation>
        <location evidence="4">Secreted</location>
    </subcellularLocation>
</comment>
<protein>
    <recommendedName>
        <fullName>Uncharacterized secreted protein ARB_08043</fullName>
    </recommendedName>
</protein>
<dbReference type="EMBL" id="ABSU01000011">
    <property type="protein sequence ID" value="EFE33291.1"/>
    <property type="molecule type" value="Genomic_DNA"/>
</dbReference>
<dbReference type="RefSeq" id="XP_003013931.1">
    <property type="nucleotide sequence ID" value="XM_003013885.1"/>
</dbReference>
<dbReference type="SMR" id="D4AUX6"/>
<dbReference type="STRING" id="663331.D4AUX6"/>
<dbReference type="GeneID" id="9521349"/>
<dbReference type="KEGG" id="abe:ARB_08043"/>
<dbReference type="eggNOG" id="ENOG502RUV2">
    <property type="taxonomic scope" value="Eukaryota"/>
</dbReference>
<dbReference type="HOGENOM" id="CLU_037358_0_1_1"/>
<dbReference type="OMA" id="CNNYVEF"/>
<dbReference type="Proteomes" id="UP000008866">
    <property type="component" value="Unassembled WGS sequence"/>
</dbReference>
<dbReference type="GO" id="GO:0005576">
    <property type="term" value="C:extracellular region"/>
    <property type="evidence" value="ECO:0007669"/>
    <property type="project" value="UniProtKB-SubCell"/>
</dbReference>
<dbReference type="GO" id="GO:0008081">
    <property type="term" value="F:phosphoric diester hydrolase activity"/>
    <property type="evidence" value="ECO:0007669"/>
    <property type="project" value="InterPro"/>
</dbReference>
<dbReference type="GO" id="GO:0006629">
    <property type="term" value="P:lipid metabolic process"/>
    <property type="evidence" value="ECO:0007669"/>
    <property type="project" value="InterPro"/>
</dbReference>
<dbReference type="CDD" id="cd08588">
    <property type="entry name" value="PI-PLCc_At5g67130_like"/>
    <property type="match status" value="1"/>
</dbReference>
<dbReference type="Gene3D" id="3.20.20.190">
    <property type="entry name" value="Phosphatidylinositol (PI) phosphodiesterase"/>
    <property type="match status" value="1"/>
</dbReference>
<dbReference type="InterPro" id="IPR051057">
    <property type="entry name" value="PI-PLC_domain"/>
</dbReference>
<dbReference type="InterPro" id="IPR017946">
    <property type="entry name" value="PLC-like_Pdiesterase_TIM-brl"/>
</dbReference>
<dbReference type="PANTHER" id="PTHR13593">
    <property type="match status" value="1"/>
</dbReference>
<dbReference type="PANTHER" id="PTHR13593:SF140">
    <property type="entry name" value="PLC-LIKE PHOSPHODIESTERASE"/>
    <property type="match status" value="1"/>
</dbReference>
<dbReference type="SUPFAM" id="SSF51695">
    <property type="entry name" value="PLC-like phosphodiesterases"/>
    <property type="match status" value="1"/>
</dbReference>
<sequence>MEILLIVLGAVVAGLLCPVQTAAEATITLTGSDIPTSISIHHGTRTPTSSGELSQSTFSSSSTNSSDSFYTTTSASYTLLVGSHTTSTVTANETTLSGNATATETSREPQPTNTRPCNGYAEFCARSYGNITQVAAHNSPFVRPGNIASNQELDVVTQLNDGIRMLQFQTHLVNGTIYLCHSSCDLLNAGTLESYLKKVADWLRDNPYDVVSLLIGNGDFVGVKNFTAPIQSSGLIDHVYTPKNHSIALDDWPTLSEVILSGKRAMVFMDYEANHGEVPYILDEFTYIWETPFSPTDRNFPCDIQRPPGLNEADARKRMYMANHNLNLEISIAGATILVPNTVLLNETNAVSGFGSMGAMAGNCTEKWNRPPNFLLVDYYNIGNVNGSVFQVAAKLNNVTYNGKCCGRTTSLASESVLGRLSGKLEMIYSMIVINILVMTIL</sequence>